<sequence length="147" mass="16169">MNPAHLLVLAAVCVSLLGAAIVPPQPLNLYQFNNMIQCANHGNRPTWHYAHYGCYCGKGGGGTAVDELDRCCQTHDNCYGEAEKLPKCSPYYKTYKYDCSEGKLTCKDAPGSCERSVCDCDRVAANCFAGAPYNNDNFFISFKENCQ</sequence>
<keyword id="KW-0106">Calcium</keyword>
<keyword id="KW-1015">Disulfide bond</keyword>
<keyword id="KW-0378">Hydrolase</keyword>
<keyword id="KW-0442">Lipid degradation</keyword>
<keyword id="KW-0443">Lipid metabolism</keyword>
<keyword id="KW-0479">Metal-binding</keyword>
<keyword id="KW-0964">Secreted</keyword>
<keyword id="KW-0732">Signal</keyword>
<accession>Q7T2Q5</accession>
<comment type="function">
    <text>PLA2 catalyzes the calcium-dependent hydrolysis of the 2-acyl groups in 3-sn-phosphoglycerides.</text>
</comment>
<comment type="catalytic activity">
    <reaction evidence="3 4">
        <text>a 1,2-diacyl-sn-glycero-3-phosphocholine + H2O = a 1-acyl-sn-glycero-3-phosphocholine + a fatty acid + H(+)</text>
        <dbReference type="Rhea" id="RHEA:15801"/>
        <dbReference type="ChEBI" id="CHEBI:15377"/>
        <dbReference type="ChEBI" id="CHEBI:15378"/>
        <dbReference type="ChEBI" id="CHEBI:28868"/>
        <dbReference type="ChEBI" id="CHEBI:57643"/>
        <dbReference type="ChEBI" id="CHEBI:58168"/>
        <dbReference type="EC" id="3.1.1.4"/>
    </reaction>
</comment>
<comment type="cofactor">
    <cofactor evidence="1">
        <name>Ca(2+)</name>
        <dbReference type="ChEBI" id="CHEBI:29108"/>
    </cofactor>
    <text evidence="1">Binds 1 Ca(2+) ion.</text>
</comment>
<comment type="subcellular location">
    <subcellularLocation>
        <location evidence="1">Secreted</location>
    </subcellularLocation>
</comment>
<comment type="tissue specificity">
    <text>Expressed by the venom gland.</text>
</comment>
<comment type="similarity">
    <text evidence="5">Belongs to the phospholipase A2 family. Group I subfamily. D49 sub-subfamily.</text>
</comment>
<proteinExistence type="evidence at transcript level"/>
<evidence type="ECO:0000250" key="1"/>
<evidence type="ECO:0000255" key="2"/>
<evidence type="ECO:0000255" key="3">
    <source>
        <dbReference type="PROSITE-ProRule" id="PRU10035"/>
    </source>
</evidence>
<evidence type="ECO:0000255" key="4">
    <source>
        <dbReference type="PROSITE-ProRule" id="PRU10036"/>
    </source>
</evidence>
<evidence type="ECO:0000305" key="5"/>
<reference key="1">
    <citation type="journal article" date="2006" name="Toxicon">
        <title>Molecular cloning of the major lethal toxins from two kraits (Bungarus flaviceps and Bungarus candidus).</title>
        <authorList>
            <person name="Yanoshita R."/>
            <person name="Ogawa Y."/>
            <person name="Murayama N."/>
            <person name="Omori-Satoh T."/>
            <person name="Saguchi K."/>
            <person name="Higuchi S."/>
            <person name="Khow O."/>
            <person name="Chanhome L."/>
            <person name="Samejima Y."/>
            <person name="Sitprija V."/>
        </authorList>
    </citation>
    <scope>NUCLEOTIDE SEQUENCE [MRNA]</scope>
    <source>
        <tissue>Venom gland</tissue>
    </source>
</reference>
<dbReference type="EC" id="3.1.1.4"/>
<dbReference type="EMBL" id="AB112359">
    <property type="protein sequence ID" value="BAC77655.1"/>
    <property type="molecule type" value="mRNA"/>
</dbReference>
<dbReference type="SMR" id="Q7T2Q5"/>
<dbReference type="GO" id="GO:0005576">
    <property type="term" value="C:extracellular region"/>
    <property type="evidence" value="ECO:0007669"/>
    <property type="project" value="UniProtKB-SubCell"/>
</dbReference>
<dbReference type="GO" id="GO:0005509">
    <property type="term" value="F:calcium ion binding"/>
    <property type="evidence" value="ECO:0007669"/>
    <property type="project" value="InterPro"/>
</dbReference>
<dbReference type="GO" id="GO:0047498">
    <property type="term" value="F:calcium-dependent phospholipase A2 activity"/>
    <property type="evidence" value="ECO:0007669"/>
    <property type="project" value="TreeGrafter"/>
</dbReference>
<dbReference type="GO" id="GO:0005543">
    <property type="term" value="F:phospholipid binding"/>
    <property type="evidence" value="ECO:0007669"/>
    <property type="project" value="TreeGrafter"/>
</dbReference>
<dbReference type="GO" id="GO:0050482">
    <property type="term" value="P:arachidonate secretion"/>
    <property type="evidence" value="ECO:0007669"/>
    <property type="project" value="InterPro"/>
</dbReference>
<dbReference type="GO" id="GO:0016042">
    <property type="term" value="P:lipid catabolic process"/>
    <property type="evidence" value="ECO:0007669"/>
    <property type="project" value="UniProtKB-KW"/>
</dbReference>
<dbReference type="GO" id="GO:0006644">
    <property type="term" value="P:phospholipid metabolic process"/>
    <property type="evidence" value="ECO:0007669"/>
    <property type="project" value="InterPro"/>
</dbReference>
<dbReference type="CDD" id="cd00125">
    <property type="entry name" value="PLA2c"/>
    <property type="match status" value="1"/>
</dbReference>
<dbReference type="FunFam" id="1.20.90.10:FF:000007">
    <property type="entry name" value="Acidic phospholipase A2"/>
    <property type="match status" value="1"/>
</dbReference>
<dbReference type="Gene3D" id="1.20.90.10">
    <property type="entry name" value="Phospholipase A2 domain"/>
    <property type="match status" value="1"/>
</dbReference>
<dbReference type="InterPro" id="IPR001211">
    <property type="entry name" value="PLipase_A2"/>
</dbReference>
<dbReference type="InterPro" id="IPR033112">
    <property type="entry name" value="PLipase_A2_Asp_AS"/>
</dbReference>
<dbReference type="InterPro" id="IPR016090">
    <property type="entry name" value="PLipase_A2_dom"/>
</dbReference>
<dbReference type="InterPro" id="IPR036444">
    <property type="entry name" value="PLipase_A2_dom_sf"/>
</dbReference>
<dbReference type="InterPro" id="IPR033113">
    <property type="entry name" value="PLipase_A2_His_AS"/>
</dbReference>
<dbReference type="PANTHER" id="PTHR11716:SF94">
    <property type="entry name" value="PHOSPHOLIPASE A2"/>
    <property type="match status" value="1"/>
</dbReference>
<dbReference type="PANTHER" id="PTHR11716">
    <property type="entry name" value="PHOSPHOLIPASE A2 FAMILY MEMBER"/>
    <property type="match status" value="1"/>
</dbReference>
<dbReference type="Pfam" id="PF00068">
    <property type="entry name" value="Phospholip_A2_1"/>
    <property type="match status" value="1"/>
</dbReference>
<dbReference type="PRINTS" id="PR00389">
    <property type="entry name" value="PHPHLIPASEA2"/>
</dbReference>
<dbReference type="SMART" id="SM00085">
    <property type="entry name" value="PA2c"/>
    <property type="match status" value="1"/>
</dbReference>
<dbReference type="SUPFAM" id="SSF48619">
    <property type="entry name" value="Phospholipase A2, PLA2"/>
    <property type="match status" value="1"/>
</dbReference>
<dbReference type="PROSITE" id="PS00119">
    <property type="entry name" value="PA2_ASP"/>
    <property type="match status" value="1"/>
</dbReference>
<dbReference type="PROSITE" id="PS00118">
    <property type="entry name" value="PA2_HIS"/>
    <property type="match status" value="1"/>
</dbReference>
<name>PA2A1_BUNFL</name>
<protein>
    <recommendedName>
        <fullName>Acidic phospholipase A2 1</fullName>
        <shortName>svPLA2</shortName>
        <ecNumber>3.1.1.4</ecNumber>
    </recommendedName>
    <alternativeName>
        <fullName>PA2-I</fullName>
    </alternativeName>
    <alternativeName>
        <fullName>Phosphatidylcholine 2-acylhydrolase</fullName>
    </alternativeName>
</protein>
<organism>
    <name type="scientific">Bungarus flaviceps flaviceps</name>
    <name type="common">Red-headed krait</name>
    <dbReference type="NCBI Taxonomy" id="8615"/>
    <lineage>
        <taxon>Eukaryota</taxon>
        <taxon>Metazoa</taxon>
        <taxon>Chordata</taxon>
        <taxon>Craniata</taxon>
        <taxon>Vertebrata</taxon>
        <taxon>Euteleostomi</taxon>
        <taxon>Lepidosauria</taxon>
        <taxon>Squamata</taxon>
        <taxon>Bifurcata</taxon>
        <taxon>Unidentata</taxon>
        <taxon>Episquamata</taxon>
        <taxon>Toxicofera</taxon>
        <taxon>Serpentes</taxon>
        <taxon>Colubroidea</taxon>
        <taxon>Elapidae</taxon>
        <taxon>Bungarinae</taxon>
        <taxon>Bungarus</taxon>
    </lineage>
</organism>
<feature type="signal peptide" evidence="2">
    <location>
        <begin position="1"/>
        <end position="19"/>
    </location>
</feature>
<feature type="propeptide" id="PRO_0000271457" evidence="1">
    <location>
        <begin position="20"/>
        <end position="27"/>
    </location>
</feature>
<feature type="chain" id="PRO_5000050835" description="Acidic phospholipase A2 1">
    <location>
        <begin position="28"/>
        <end position="147"/>
    </location>
</feature>
<feature type="active site" evidence="1">
    <location>
        <position position="75"/>
    </location>
</feature>
<feature type="active site" evidence="1">
    <location>
        <position position="121"/>
    </location>
</feature>
<feature type="binding site" evidence="1">
    <location>
        <position position="55"/>
    </location>
    <ligand>
        <name>Ca(2+)</name>
        <dbReference type="ChEBI" id="CHEBI:29108"/>
    </ligand>
</feature>
<feature type="binding site" evidence="1">
    <location>
        <position position="57"/>
    </location>
    <ligand>
        <name>Ca(2+)</name>
        <dbReference type="ChEBI" id="CHEBI:29108"/>
    </ligand>
</feature>
<feature type="binding site" evidence="1">
    <location>
        <position position="59"/>
    </location>
    <ligand>
        <name>Ca(2+)</name>
        <dbReference type="ChEBI" id="CHEBI:29108"/>
    </ligand>
</feature>
<feature type="binding site" evidence="1">
    <location>
        <position position="76"/>
    </location>
    <ligand>
        <name>Ca(2+)</name>
        <dbReference type="ChEBI" id="CHEBI:29108"/>
    </ligand>
</feature>
<feature type="disulfide bond" evidence="1">
    <location>
        <begin position="38"/>
        <end position="99"/>
    </location>
</feature>
<feature type="disulfide bond" evidence="1">
    <location>
        <begin position="54"/>
        <end position="146"/>
    </location>
</feature>
<feature type="disulfide bond" evidence="1">
    <location>
        <begin position="56"/>
        <end position="72"/>
    </location>
</feature>
<feature type="disulfide bond" evidence="1">
    <location>
        <begin position="71"/>
        <end position="127"/>
    </location>
</feature>
<feature type="disulfide bond" evidence="1">
    <location>
        <begin position="78"/>
        <end position="120"/>
    </location>
</feature>
<feature type="disulfide bond" evidence="1">
    <location>
        <begin position="88"/>
        <end position="113"/>
    </location>
</feature>
<feature type="disulfide bond" evidence="1">
    <location>
        <begin position="106"/>
        <end position="118"/>
    </location>
</feature>